<comment type="function">
    <text evidence="1">May play a role in cell differentiation in the intestinal epithelium.</text>
</comment>
<comment type="subcellular location">
    <subcellularLocation>
        <location evidence="1">Membrane</location>
        <topology evidence="1">Multi-pass membrane protein</topology>
    </subcellularLocation>
</comment>
<comment type="developmental stage">
    <text evidence="4">Maximally expressed at the beginning of gastrulation.</text>
</comment>
<gene>
    <name type="primary">PLP2</name>
</gene>
<name>PLP2_RABIT</name>
<evidence type="ECO:0000250" key="1"/>
<evidence type="ECO:0000255" key="2"/>
<evidence type="ECO:0000255" key="3">
    <source>
        <dbReference type="PROSITE-ProRule" id="PRU00581"/>
    </source>
</evidence>
<evidence type="ECO:0000269" key="4">
    <source>
    </source>
</evidence>
<accession>Q95MN6</accession>
<sequence length="152" mass="16747">MADSERLSAPGCWAACTTFSRTRKGILLLAEIILCLVILICFSAGTSGYSSLSVVEMVLAIVFFVIYMCDLHTRAPFINWPWSDFFRTLIAAILYLITSIFVLVERGNHSKIAAGVLGLLATCLFGYDAYFTFPLRQQRHTAAPTDPTDGPV</sequence>
<organism>
    <name type="scientific">Oryctolagus cuniculus</name>
    <name type="common">Rabbit</name>
    <dbReference type="NCBI Taxonomy" id="9986"/>
    <lineage>
        <taxon>Eukaryota</taxon>
        <taxon>Metazoa</taxon>
        <taxon>Chordata</taxon>
        <taxon>Craniata</taxon>
        <taxon>Vertebrata</taxon>
        <taxon>Euteleostomi</taxon>
        <taxon>Mammalia</taxon>
        <taxon>Eutheria</taxon>
        <taxon>Euarchontoglires</taxon>
        <taxon>Glires</taxon>
        <taxon>Lagomorpha</taxon>
        <taxon>Leporidae</taxon>
        <taxon>Oryctolagus</taxon>
    </lineage>
</organism>
<feature type="chain" id="PRO_0000156821" description="Proteolipid protein 2">
    <location>
        <begin position="1"/>
        <end position="152"/>
    </location>
</feature>
<feature type="transmembrane region" description="Helical" evidence="2">
    <location>
        <begin position="25"/>
        <end position="45"/>
    </location>
</feature>
<feature type="transmembrane region" description="Helical" evidence="2">
    <location>
        <begin position="48"/>
        <end position="68"/>
    </location>
</feature>
<feature type="transmembrane region" description="Helical" evidence="2">
    <location>
        <begin position="85"/>
        <end position="105"/>
    </location>
</feature>
<feature type="transmembrane region" description="Helical" evidence="2">
    <location>
        <begin position="112"/>
        <end position="132"/>
    </location>
</feature>
<feature type="domain" description="MARVEL" evidence="3">
    <location>
        <begin position="19"/>
        <end position="137"/>
    </location>
</feature>
<feature type="glycosylation site" description="N-linked (GlcNAc...) asparagine" evidence="2">
    <location>
        <position position="108"/>
    </location>
</feature>
<keyword id="KW-0325">Glycoprotein</keyword>
<keyword id="KW-0472">Membrane</keyword>
<keyword id="KW-1185">Reference proteome</keyword>
<keyword id="KW-0812">Transmembrane</keyword>
<keyword id="KW-1133">Transmembrane helix</keyword>
<dbReference type="EMBL" id="AF314164">
    <property type="protein sequence ID" value="AAK72225.1"/>
    <property type="molecule type" value="mRNA"/>
</dbReference>
<dbReference type="RefSeq" id="NP_001075566.1">
    <property type="nucleotide sequence ID" value="NM_001082097.1"/>
</dbReference>
<dbReference type="SMR" id="Q95MN6"/>
<dbReference type="FunCoup" id="Q95MN6">
    <property type="interactions" value="318"/>
</dbReference>
<dbReference type="GlyCosmos" id="Q95MN6">
    <property type="glycosylation" value="1 site, No reported glycans"/>
</dbReference>
<dbReference type="GeneID" id="100008797"/>
<dbReference type="KEGG" id="ocu:100008797"/>
<dbReference type="CTD" id="5355"/>
<dbReference type="InParanoid" id="Q95MN6"/>
<dbReference type="OrthoDB" id="9898022at2759"/>
<dbReference type="Proteomes" id="UP000001811">
    <property type="component" value="Unplaced"/>
</dbReference>
<dbReference type="GO" id="GO:0016020">
    <property type="term" value="C:membrane"/>
    <property type="evidence" value="ECO:0007669"/>
    <property type="project" value="UniProtKB-SubCell"/>
</dbReference>
<dbReference type="InterPro" id="IPR008253">
    <property type="entry name" value="Marvel"/>
</dbReference>
<dbReference type="InterPro" id="IPR050578">
    <property type="entry name" value="MARVEL-CKLF_proteins"/>
</dbReference>
<dbReference type="PANTHER" id="PTHR22776">
    <property type="entry name" value="MARVEL-CONTAINING POTENTIAL LIPID RAFT-ASSOCIATED PROTEIN"/>
    <property type="match status" value="1"/>
</dbReference>
<dbReference type="PANTHER" id="PTHR22776:SF4">
    <property type="entry name" value="PROTEOLIPID PROTEIN 2"/>
    <property type="match status" value="1"/>
</dbReference>
<dbReference type="Pfam" id="PF01284">
    <property type="entry name" value="MARVEL"/>
    <property type="match status" value="1"/>
</dbReference>
<dbReference type="PROSITE" id="PS51225">
    <property type="entry name" value="MARVEL"/>
    <property type="match status" value="1"/>
</dbReference>
<protein>
    <recommendedName>
        <fullName>Proteolipid protein 2</fullName>
    </recommendedName>
</protein>
<proteinExistence type="evidence at transcript level"/>
<reference key="1">
    <citation type="journal article" date="2001" name="Mech. Dev.">
        <title>Proteolipid protein 2 mRNA is expressed in the rabbit embryo during gastrulation.</title>
        <authorList>
            <person name="Milde S."/>
            <person name="Viebahn C."/>
            <person name="Kirchner C."/>
        </authorList>
    </citation>
    <scope>NUCLEOTIDE SEQUENCE [MRNA]</scope>
    <scope>DEVELOPMENTAL STAGE</scope>
</reference>